<gene>
    <name evidence="1" type="primary">rpoC</name>
    <name type="ordered locus">NTHI0640</name>
</gene>
<feature type="chain" id="PRO_0000225540" description="DNA-directed RNA polymerase subunit beta'">
    <location>
        <begin position="1"/>
        <end position="1416"/>
    </location>
</feature>
<feature type="binding site" evidence="1">
    <location>
        <position position="71"/>
    </location>
    <ligand>
        <name>Zn(2+)</name>
        <dbReference type="ChEBI" id="CHEBI:29105"/>
        <label>1</label>
    </ligand>
</feature>
<feature type="binding site" evidence="1">
    <location>
        <position position="73"/>
    </location>
    <ligand>
        <name>Zn(2+)</name>
        <dbReference type="ChEBI" id="CHEBI:29105"/>
        <label>1</label>
    </ligand>
</feature>
<feature type="binding site" evidence="1">
    <location>
        <position position="86"/>
    </location>
    <ligand>
        <name>Zn(2+)</name>
        <dbReference type="ChEBI" id="CHEBI:29105"/>
        <label>1</label>
    </ligand>
</feature>
<feature type="binding site" evidence="1">
    <location>
        <position position="89"/>
    </location>
    <ligand>
        <name>Zn(2+)</name>
        <dbReference type="ChEBI" id="CHEBI:29105"/>
        <label>1</label>
    </ligand>
</feature>
<feature type="binding site" evidence="1">
    <location>
        <position position="461"/>
    </location>
    <ligand>
        <name>Mg(2+)</name>
        <dbReference type="ChEBI" id="CHEBI:18420"/>
    </ligand>
</feature>
<feature type="binding site" evidence="1">
    <location>
        <position position="463"/>
    </location>
    <ligand>
        <name>Mg(2+)</name>
        <dbReference type="ChEBI" id="CHEBI:18420"/>
    </ligand>
</feature>
<feature type="binding site" evidence="1">
    <location>
        <position position="465"/>
    </location>
    <ligand>
        <name>Mg(2+)</name>
        <dbReference type="ChEBI" id="CHEBI:18420"/>
    </ligand>
</feature>
<feature type="binding site" evidence="1">
    <location>
        <position position="815"/>
    </location>
    <ligand>
        <name>Zn(2+)</name>
        <dbReference type="ChEBI" id="CHEBI:29105"/>
        <label>2</label>
    </ligand>
</feature>
<feature type="binding site" evidence="1">
    <location>
        <position position="889"/>
    </location>
    <ligand>
        <name>Zn(2+)</name>
        <dbReference type="ChEBI" id="CHEBI:29105"/>
        <label>2</label>
    </ligand>
</feature>
<feature type="binding site" evidence="1">
    <location>
        <position position="896"/>
    </location>
    <ligand>
        <name>Zn(2+)</name>
        <dbReference type="ChEBI" id="CHEBI:29105"/>
        <label>2</label>
    </ligand>
</feature>
<feature type="binding site" evidence="1">
    <location>
        <position position="899"/>
    </location>
    <ligand>
        <name>Zn(2+)</name>
        <dbReference type="ChEBI" id="CHEBI:29105"/>
        <label>2</label>
    </ligand>
</feature>
<proteinExistence type="inferred from homology"/>
<sequence length="1416" mass="157217">MKDLVKFLKAQSKTSEDFDVIKIGLASPDMIRSWSFGEVKKPETINYRTFKPERDGLFCARIFGPVKDYECLCGKYKRLKHRGVICEKCGVEVTQTKVRRERMGHIELASPVAHIWFLKSLPSRIGLLLDMPLRDIERVLYFEMYIVTEPGMTDLERGQLLTEEQYLDAEDRWQDEFEAKMGAEAIQDLLKGMDLEAECEKLREELQETNSETKRKKITKRLKLLEAFVQSGNKPEWMVMTVLPVLPPDLRPLVPLDGGRFATSDLNDLYRRVINRNNRLKRLLDLIAPDIIVRNEKRMLQESVDALLDNGRRGRAITGSNRRPLKSLADMIKGKQGRFRQNLLGKRVDYSGRSVITVGPYLHLHQCGLPKKMALELFRPFIYAKLESRGYATTIKAAKKMVEREEAIVWDILAEVIREHPILLNRAPTLHRLGIQAFEPILIEGKAIQLHPLVCAAFNADFDGDQMAVHVPLTLEAQLEARALMMSTNNVLSPANGDPIIVPSQDVVLGLYYMTREKVNGKGEGMLLQDPREAEKAYRTGEAELHSRVKVRITEYVKNEAGEFDAKTTLTDTTIGRAILWMIAPKGMPYSLFNQTLGKKAISKLINEAYRRLGLKEAVMFADQIMYTGFAYAARSGSSVGIDDMEIPAKKYEIISAAEEEVAEIQEQFQSGLVTAGERYNKVIDIWAAANERVAKAMMENLSQEEVINREGNPEKQASFNSIFMMADSGARGSAAQIRQLAGMRGLMARPDGSIIETPITANFREGLNVLQYFISTHGARKGLADTALKTANSGYLTRRLVDVAQDLVIVEDDCGTHEGLVMTPLIEGGDEKVPLRELVLGRVAAEDILKPGAEEVLIPRNTLLDEKLCDVLDANSVDSVKVRSVVTCDTDFGVCAKCYGRDLARGHLINQGEAVGVIAAQSIGEPGTQLTMRTFHIGGAASAAAKESSVQVKNTGTVHLMNAKFVTNDESKLVLTSRNTELTITDAFGRTKEHYKVPYGAVLSKGDGQEVTAGETIANWDPHTMPVVSEVSGFVKFVDIIDGLTVTRQTDELTGLSSIVVQDVGERATAGKDLRPTIKLVDANGNDIFLPETDVLAQYFLPGKAIVSLDDGAAVKVGEPLARIPQESVGTKDITGGLPRVADLFEARKPKEPAILAEISGIVSFGKETKGKRRLLITPAEGETYEEMIPKWRQLNVFEGEMVQRGDVISDGAETPHDILRLRGVRAVTEYIVNEVQDVYRLQGVKINDKHIEVIVRQMLRKAVITKAYDSEFLEGEQVEVARVKIVNRQREAEGKPPVEFERELLGITKASLATESFISAASFQETTRVLTEAAVAGKRDELRGLKENVIVGRLIPAGTGFAYHQNRHKHRLVDDVVAKLSEEDEAAIADEFVMTADDASANLAEMLNMADDAE</sequence>
<reference key="1">
    <citation type="journal article" date="2005" name="J. Bacteriol.">
        <title>Genomic sequence of an otitis media isolate of nontypeable Haemophilus influenzae: comparative study with H. influenzae serotype d, strain KW20.</title>
        <authorList>
            <person name="Harrison A."/>
            <person name="Dyer D.W."/>
            <person name="Gillaspy A."/>
            <person name="Ray W.C."/>
            <person name="Mungur R."/>
            <person name="Carson M.B."/>
            <person name="Zhong H."/>
            <person name="Gipson J."/>
            <person name="Gipson M."/>
            <person name="Johnson L.S."/>
            <person name="Lewis L."/>
            <person name="Bakaletz L.O."/>
            <person name="Munson R.S. Jr."/>
        </authorList>
    </citation>
    <scope>NUCLEOTIDE SEQUENCE [LARGE SCALE GENOMIC DNA]</scope>
    <source>
        <strain>86-028NP</strain>
    </source>
</reference>
<protein>
    <recommendedName>
        <fullName evidence="1">DNA-directed RNA polymerase subunit beta'</fullName>
        <shortName evidence="1">RNAP subunit beta'</shortName>
        <ecNumber evidence="1">2.7.7.6</ecNumber>
    </recommendedName>
    <alternativeName>
        <fullName evidence="1">RNA polymerase subunit beta'</fullName>
    </alternativeName>
    <alternativeName>
        <fullName evidence="1">Transcriptase subunit beta'</fullName>
    </alternativeName>
</protein>
<accession>Q4QN34</accession>
<keyword id="KW-0240">DNA-directed RNA polymerase</keyword>
<keyword id="KW-0460">Magnesium</keyword>
<keyword id="KW-0479">Metal-binding</keyword>
<keyword id="KW-0548">Nucleotidyltransferase</keyword>
<keyword id="KW-0804">Transcription</keyword>
<keyword id="KW-0808">Transferase</keyword>
<keyword id="KW-0862">Zinc</keyword>
<name>RPOC_HAEI8</name>
<comment type="function">
    <text evidence="1">DNA-dependent RNA polymerase catalyzes the transcription of DNA into RNA using the four ribonucleoside triphosphates as substrates.</text>
</comment>
<comment type="catalytic activity">
    <reaction evidence="1">
        <text>RNA(n) + a ribonucleoside 5'-triphosphate = RNA(n+1) + diphosphate</text>
        <dbReference type="Rhea" id="RHEA:21248"/>
        <dbReference type="Rhea" id="RHEA-COMP:14527"/>
        <dbReference type="Rhea" id="RHEA-COMP:17342"/>
        <dbReference type="ChEBI" id="CHEBI:33019"/>
        <dbReference type="ChEBI" id="CHEBI:61557"/>
        <dbReference type="ChEBI" id="CHEBI:140395"/>
        <dbReference type="EC" id="2.7.7.6"/>
    </reaction>
</comment>
<comment type="cofactor">
    <cofactor evidence="1">
        <name>Mg(2+)</name>
        <dbReference type="ChEBI" id="CHEBI:18420"/>
    </cofactor>
    <text evidence="1">Binds 1 Mg(2+) ion per subunit.</text>
</comment>
<comment type="cofactor">
    <cofactor evidence="1">
        <name>Zn(2+)</name>
        <dbReference type="ChEBI" id="CHEBI:29105"/>
    </cofactor>
    <text evidence="1">Binds 2 Zn(2+) ions per subunit.</text>
</comment>
<comment type="subunit">
    <text evidence="1">The RNAP catalytic core consists of 2 alpha, 1 beta, 1 beta' and 1 omega subunit. When a sigma factor is associated with the core the holoenzyme is formed, which can initiate transcription.</text>
</comment>
<comment type="similarity">
    <text evidence="1">Belongs to the RNA polymerase beta' chain family.</text>
</comment>
<organism>
    <name type="scientific">Haemophilus influenzae (strain 86-028NP)</name>
    <dbReference type="NCBI Taxonomy" id="281310"/>
    <lineage>
        <taxon>Bacteria</taxon>
        <taxon>Pseudomonadati</taxon>
        <taxon>Pseudomonadota</taxon>
        <taxon>Gammaproteobacteria</taxon>
        <taxon>Pasteurellales</taxon>
        <taxon>Pasteurellaceae</taxon>
        <taxon>Haemophilus</taxon>
    </lineage>
</organism>
<dbReference type="EC" id="2.7.7.6" evidence="1"/>
<dbReference type="EMBL" id="CP000057">
    <property type="protein sequence ID" value="AAX87563.1"/>
    <property type="molecule type" value="Genomic_DNA"/>
</dbReference>
<dbReference type="RefSeq" id="WP_005659731.1">
    <property type="nucleotide sequence ID" value="NC_007146.2"/>
</dbReference>
<dbReference type="SMR" id="Q4QN34"/>
<dbReference type="GeneID" id="93219523"/>
<dbReference type="KEGG" id="hit:NTHI0640"/>
<dbReference type="HOGENOM" id="CLU_000524_3_1_6"/>
<dbReference type="Proteomes" id="UP000002525">
    <property type="component" value="Chromosome"/>
</dbReference>
<dbReference type="GO" id="GO:0000428">
    <property type="term" value="C:DNA-directed RNA polymerase complex"/>
    <property type="evidence" value="ECO:0007669"/>
    <property type="project" value="UniProtKB-KW"/>
</dbReference>
<dbReference type="GO" id="GO:0003677">
    <property type="term" value="F:DNA binding"/>
    <property type="evidence" value="ECO:0007669"/>
    <property type="project" value="UniProtKB-UniRule"/>
</dbReference>
<dbReference type="GO" id="GO:0003899">
    <property type="term" value="F:DNA-directed RNA polymerase activity"/>
    <property type="evidence" value="ECO:0007669"/>
    <property type="project" value="UniProtKB-UniRule"/>
</dbReference>
<dbReference type="GO" id="GO:0000287">
    <property type="term" value="F:magnesium ion binding"/>
    <property type="evidence" value="ECO:0007669"/>
    <property type="project" value="UniProtKB-UniRule"/>
</dbReference>
<dbReference type="GO" id="GO:0008270">
    <property type="term" value="F:zinc ion binding"/>
    <property type="evidence" value="ECO:0007669"/>
    <property type="project" value="UniProtKB-UniRule"/>
</dbReference>
<dbReference type="GO" id="GO:0006351">
    <property type="term" value="P:DNA-templated transcription"/>
    <property type="evidence" value="ECO:0007669"/>
    <property type="project" value="UniProtKB-UniRule"/>
</dbReference>
<dbReference type="CDD" id="cd02655">
    <property type="entry name" value="RNAP_beta'_C"/>
    <property type="match status" value="1"/>
</dbReference>
<dbReference type="CDD" id="cd01609">
    <property type="entry name" value="RNAP_beta'_N"/>
    <property type="match status" value="1"/>
</dbReference>
<dbReference type="FunFam" id="1.10.132.30:FF:000003">
    <property type="entry name" value="DNA-directed RNA polymerase subunit beta"/>
    <property type="match status" value="1"/>
</dbReference>
<dbReference type="FunFam" id="1.10.150.390:FF:000002">
    <property type="entry name" value="DNA-directed RNA polymerase subunit beta"/>
    <property type="match status" value="1"/>
</dbReference>
<dbReference type="FunFam" id="1.10.40.90:FF:000001">
    <property type="entry name" value="DNA-directed RNA polymerase subunit beta"/>
    <property type="match status" value="1"/>
</dbReference>
<dbReference type="FunFam" id="4.10.860.120:FF:000001">
    <property type="entry name" value="DNA-directed RNA polymerase subunit beta"/>
    <property type="match status" value="1"/>
</dbReference>
<dbReference type="Gene3D" id="1.10.132.30">
    <property type="match status" value="1"/>
</dbReference>
<dbReference type="Gene3D" id="1.10.150.390">
    <property type="match status" value="1"/>
</dbReference>
<dbReference type="Gene3D" id="1.10.1790.20">
    <property type="match status" value="1"/>
</dbReference>
<dbReference type="Gene3D" id="1.10.40.90">
    <property type="match status" value="1"/>
</dbReference>
<dbReference type="Gene3D" id="2.40.40.20">
    <property type="match status" value="1"/>
</dbReference>
<dbReference type="Gene3D" id="2.40.50.100">
    <property type="match status" value="3"/>
</dbReference>
<dbReference type="Gene3D" id="4.10.860.120">
    <property type="entry name" value="RNA polymerase II, clamp domain"/>
    <property type="match status" value="1"/>
</dbReference>
<dbReference type="Gene3D" id="1.10.274.100">
    <property type="entry name" value="RNA polymerase Rpb1, domain 3"/>
    <property type="match status" value="1"/>
</dbReference>
<dbReference type="HAMAP" id="MF_01322">
    <property type="entry name" value="RNApol_bact_RpoC"/>
    <property type="match status" value="1"/>
</dbReference>
<dbReference type="InterPro" id="IPR045867">
    <property type="entry name" value="DNA-dir_RpoC_beta_prime"/>
</dbReference>
<dbReference type="InterPro" id="IPR012754">
    <property type="entry name" value="DNA-dir_RpoC_beta_prime_bact"/>
</dbReference>
<dbReference type="InterPro" id="IPR000722">
    <property type="entry name" value="RNA_pol_asu"/>
</dbReference>
<dbReference type="InterPro" id="IPR006592">
    <property type="entry name" value="RNA_pol_N"/>
</dbReference>
<dbReference type="InterPro" id="IPR007080">
    <property type="entry name" value="RNA_pol_Rpb1_1"/>
</dbReference>
<dbReference type="InterPro" id="IPR007066">
    <property type="entry name" value="RNA_pol_Rpb1_3"/>
</dbReference>
<dbReference type="InterPro" id="IPR042102">
    <property type="entry name" value="RNA_pol_Rpb1_3_sf"/>
</dbReference>
<dbReference type="InterPro" id="IPR007083">
    <property type="entry name" value="RNA_pol_Rpb1_4"/>
</dbReference>
<dbReference type="InterPro" id="IPR007081">
    <property type="entry name" value="RNA_pol_Rpb1_5"/>
</dbReference>
<dbReference type="InterPro" id="IPR044893">
    <property type="entry name" value="RNA_pol_Rpb1_clamp_domain"/>
</dbReference>
<dbReference type="InterPro" id="IPR038120">
    <property type="entry name" value="Rpb1_funnel_sf"/>
</dbReference>
<dbReference type="NCBIfam" id="TIGR02386">
    <property type="entry name" value="rpoC_TIGR"/>
    <property type="match status" value="1"/>
</dbReference>
<dbReference type="PANTHER" id="PTHR19376">
    <property type="entry name" value="DNA-DIRECTED RNA POLYMERASE"/>
    <property type="match status" value="1"/>
</dbReference>
<dbReference type="PANTHER" id="PTHR19376:SF54">
    <property type="entry name" value="DNA-DIRECTED RNA POLYMERASE SUBUNIT BETA"/>
    <property type="match status" value="1"/>
</dbReference>
<dbReference type="Pfam" id="PF04997">
    <property type="entry name" value="RNA_pol_Rpb1_1"/>
    <property type="match status" value="1"/>
</dbReference>
<dbReference type="Pfam" id="PF00623">
    <property type="entry name" value="RNA_pol_Rpb1_2"/>
    <property type="match status" value="2"/>
</dbReference>
<dbReference type="Pfam" id="PF04983">
    <property type="entry name" value="RNA_pol_Rpb1_3"/>
    <property type="match status" value="1"/>
</dbReference>
<dbReference type="Pfam" id="PF05000">
    <property type="entry name" value="RNA_pol_Rpb1_4"/>
    <property type="match status" value="1"/>
</dbReference>
<dbReference type="Pfam" id="PF04998">
    <property type="entry name" value="RNA_pol_Rpb1_5"/>
    <property type="match status" value="1"/>
</dbReference>
<dbReference type="SMART" id="SM00663">
    <property type="entry name" value="RPOLA_N"/>
    <property type="match status" value="1"/>
</dbReference>
<dbReference type="SUPFAM" id="SSF64484">
    <property type="entry name" value="beta and beta-prime subunits of DNA dependent RNA-polymerase"/>
    <property type="match status" value="1"/>
</dbReference>
<evidence type="ECO:0000255" key="1">
    <source>
        <dbReference type="HAMAP-Rule" id="MF_01322"/>
    </source>
</evidence>